<sequence>MRMTMEEMKNEAETTSMVSMPLYAVMYPVFNELERVNLSAAQTLRAAFIKAEKENPGLTQDIIMKILEKKSVEVNFTESLLRMAADDVEEYMIERPEPEFQDLNEKARALKQILSKIPDEINDRVRFLQTIKDIASAIKELLDTVNNVFKKYQYQNRRALEHQKKEFVKYSKSFSDTLKTYFKDGKAINVFISANRLIHQTNLILQTFKTVA</sequence>
<dbReference type="EMBL" id="AF159368">
    <property type="protein sequence ID" value="AAD44335.1"/>
    <property type="molecule type" value="mRNA"/>
</dbReference>
<dbReference type="EMBL" id="AK005594">
    <property type="protein sequence ID" value="BAB24143.1"/>
    <property type="molecule type" value="mRNA"/>
</dbReference>
<dbReference type="EMBL" id="AK075926">
    <property type="protein sequence ID" value="BAC36058.1"/>
    <property type="molecule type" value="mRNA"/>
</dbReference>
<dbReference type="EMBL" id="AK077308">
    <property type="protein sequence ID" value="BAC36742.1"/>
    <property type="molecule type" value="mRNA"/>
</dbReference>
<dbReference type="EMBL" id="AK137198">
    <property type="protein sequence ID" value="BAE23263.1"/>
    <property type="molecule type" value="mRNA"/>
</dbReference>
<dbReference type="EMBL" id="AK168857">
    <property type="protein sequence ID" value="BAE40678.1"/>
    <property type="molecule type" value="mRNA"/>
</dbReference>
<dbReference type="EMBL" id="AK169689">
    <property type="protein sequence ID" value="BAE41306.1"/>
    <property type="molecule type" value="mRNA"/>
</dbReference>
<dbReference type="EMBL" id="BC019650">
    <property type="protein sequence ID" value="AAH19650.1"/>
    <property type="molecule type" value="mRNA"/>
</dbReference>
<dbReference type="EMBL" id="BC086778">
    <property type="protein sequence ID" value="AAH86778.1"/>
    <property type="molecule type" value="mRNA"/>
</dbReference>
<dbReference type="CCDS" id="CCDS17414.1"/>
<dbReference type="RefSeq" id="NP_062719.2">
    <property type="nucleotide sequence ID" value="NM_019745.4"/>
</dbReference>
<dbReference type="SMR" id="Q8VE70"/>
<dbReference type="BioGRID" id="207970">
    <property type="interactions" value="20"/>
</dbReference>
<dbReference type="ComplexPortal" id="CPX-4621">
    <property type="entry name" value="CCM complex"/>
</dbReference>
<dbReference type="CORUM" id="Q8VE70"/>
<dbReference type="FunCoup" id="Q8VE70">
    <property type="interactions" value="4831"/>
</dbReference>
<dbReference type="IntAct" id="Q8VE70">
    <property type="interactions" value="1"/>
</dbReference>
<dbReference type="MINT" id="Q8VE70"/>
<dbReference type="STRING" id="10090.ENSMUSP00000125752"/>
<dbReference type="PhosphoSitePlus" id="Q8VE70"/>
<dbReference type="jPOST" id="Q8VE70"/>
<dbReference type="PaxDb" id="10090-ENSMUSP00000125752"/>
<dbReference type="PeptideAtlas" id="Q8VE70"/>
<dbReference type="ProteomicsDB" id="287898"/>
<dbReference type="Pumba" id="Q8VE70"/>
<dbReference type="Antibodypedia" id="18593">
    <property type="antibodies" value="271 antibodies from 31 providers"/>
</dbReference>
<dbReference type="DNASU" id="56426"/>
<dbReference type="Ensembl" id="ENSMUST00000161137.8">
    <property type="protein sequence ID" value="ENSMUSP00000125752.2"/>
    <property type="gene ID" value="ENSMUSG00000027835.12"/>
</dbReference>
<dbReference type="GeneID" id="56426"/>
<dbReference type="KEGG" id="mmu:56426"/>
<dbReference type="UCSC" id="uc008pnc.2">
    <property type="organism name" value="mouse"/>
</dbReference>
<dbReference type="AGR" id="MGI:1928396"/>
<dbReference type="CTD" id="11235"/>
<dbReference type="MGI" id="MGI:1928396">
    <property type="gene designation" value="Pdcd10"/>
</dbReference>
<dbReference type="VEuPathDB" id="HostDB:ENSMUSG00000027835"/>
<dbReference type="eggNOG" id="KOG4025">
    <property type="taxonomic scope" value="Eukaryota"/>
</dbReference>
<dbReference type="GeneTree" id="ENSGT00390000017913"/>
<dbReference type="InParanoid" id="Q8VE70"/>
<dbReference type="OMA" id="HVVLFPI"/>
<dbReference type="OrthoDB" id="6017654at2759"/>
<dbReference type="PhylomeDB" id="Q8VE70"/>
<dbReference type="TreeFam" id="TF105802"/>
<dbReference type="BioGRID-ORCS" id="56426">
    <property type="hits" value="17 hits in 82 CRISPR screens"/>
</dbReference>
<dbReference type="ChiTaRS" id="Pdcd10">
    <property type="organism name" value="mouse"/>
</dbReference>
<dbReference type="PRO" id="PR:Q8VE70"/>
<dbReference type="Proteomes" id="UP000000589">
    <property type="component" value="Chromosome 3"/>
</dbReference>
<dbReference type="RNAct" id="Q8VE70">
    <property type="molecule type" value="protein"/>
</dbReference>
<dbReference type="Bgee" id="ENSMUSG00000027835">
    <property type="expression patterns" value="Expressed in spermatocyte and 289 other cell types or tissues"/>
</dbReference>
<dbReference type="ExpressionAtlas" id="Q8VE70">
    <property type="expression patterns" value="baseline and differential"/>
</dbReference>
<dbReference type="GO" id="GO:0005829">
    <property type="term" value="C:cytosol"/>
    <property type="evidence" value="ECO:0000250"/>
    <property type="project" value="UniProtKB"/>
</dbReference>
<dbReference type="GO" id="GO:0090443">
    <property type="term" value="C:FAR/SIN/STRIPAK complex"/>
    <property type="evidence" value="ECO:0007669"/>
    <property type="project" value="Ensembl"/>
</dbReference>
<dbReference type="GO" id="GO:0000139">
    <property type="term" value="C:Golgi membrane"/>
    <property type="evidence" value="ECO:0007669"/>
    <property type="project" value="UniProtKB-SubCell"/>
</dbReference>
<dbReference type="GO" id="GO:0005886">
    <property type="term" value="C:plasma membrane"/>
    <property type="evidence" value="ECO:0007669"/>
    <property type="project" value="UniProtKB-SubCell"/>
</dbReference>
<dbReference type="GO" id="GO:0042803">
    <property type="term" value="F:protein homodimerization activity"/>
    <property type="evidence" value="ECO:0007669"/>
    <property type="project" value="Ensembl"/>
</dbReference>
<dbReference type="GO" id="GO:0001525">
    <property type="term" value="P:angiogenesis"/>
    <property type="evidence" value="ECO:0007669"/>
    <property type="project" value="UniProtKB-KW"/>
</dbReference>
<dbReference type="GO" id="GO:1990830">
    <property type="term" value="P:cellular response to leukemia inhibitory factor"/>
    <property type="evidence" value="ECO:0000270"/>
    <property type="project" value="MGI"/>
</dbReference>
<dbReference type="GO" id="GO:0003158">
    <property type="term" value="P:endothelium development"/>
    <property type="evidence" value="ECO:0000303"/>
    <property type="project" value="ComplexPortal"/>
</dbReference>
<dbReference type="GO" id="GO:0051683">
    <property type="term" value="P:establishment of Golgi localization"/>
    <property type="evidence" value="ECO:0007669"/>
    <property type="project" value="Ensembl"/>
</dbReference>
<dbReference type="GO" id="GO:0090168">
    <property type="term" value="P:Golgi reassembly"/>
    <property type="evidence" value="ECO:0007669"/>
    <property type="project" value="Ensembl"/>
</dbReference>
<dbReference type="GO" id="GO:0036481">
    <property type="term" value="P:intrinsic apoptotic signaling pathway in response to hydrogen peroxide"/>
    <property type="evidence" value="ECO:0007669"/>
    <property type="project" value="Ensembl"/>
</dbReference>
<dbReference type="GO" id="GO:0043066">
    <property type="term" value="P:negative regulation of apoptotic process"/>
    <property type="evidence" value="ECO:0000250"/>
    <property type="project" value="UniProtKB"/>
</dbReference>
<dbReference type="GO" id="GO:1903588">
    <property type="term" value="P:negative regulation of blood vessel endothelial cell proliferation involved in sprouting angiogenesis"/>
    <property type="evidence" value="ECO:0007669"/>
    <property type="project" value="Ensembl"/>
</dbReference>
<dbReference type="GO" id="GO:0090051">
    <property type="term" value="P:negative regulation of cell migration involved in sprouting angiogenesis"/>
    <property type="evidence" value="ECO:0007669"/>
    <property type="project" value="Ensembl"/>
</dbReference>
<dbReference type="GO" id="GO:0010629">
    <property type="term" value="P:negative regulation of gene expression"/>
    <property type="evidence" value="ECO:0007669"/>
    <property type="project" value="Ensembl"/>
</dbReference>
<dbReference type="GO" id="GO:0030335">
    <property type="term" value="P:positive regulation of cell migration"/>
    <property type="evidence" value="ECO:0007669"/>
    <property type="project" value="Ensembl"/>
</dbReference>
<dbReference type="GO" id="GO:0008284">
    <property type="term" value="P:positive regulation of cell population proliferation"/>
    <property type="evidence" value="ECO:0000250"/>
    <property type="project" value="UniProtKB"/>
</dbReference>
<dbReference type="GO" id="GO:0010628">
    <property type="term" value="P:positive regulation of gene expression"/>
    <property type="evidence" value="ECO:0007669"/>
    <property type="project" value="Ensembl"/>
</dbReference>
<dbReference type="GO" id="GO:0090316">
    <property type="term" value="P:positive regulation of intracellular protein transport"/>
    <property type="evidence" value="ECO:0000250"/>
    <property type="project" value="UniProtKB"/>
</dbReference>
<dbReference type="GO" id="GO:0043406">
    <property type="term" value="P:positive regulation of MAP kinase activity"/>
    <property type="evidence" value="ECO:0000250"/>
    <property type="project" value="UniProtKB"/>
</dbReference>
<dbReference type="GO" id="GO:0045747">
    <property type="term" value="P:positive regulation of Notch signaling pathway"/>
    <property type="evidence" value="ECO:0007669"/>
    <property type="project" value="Ensembl"/>
</dbReference>
<dbReference type="GO" id="GO:0032874">
    <property type="term" value="P:positive regulation of stress-activated MAPK cascade"/>
    <property type="evidence" value="ECO:0007669"/>
    <property type="project" value="Ensembl"/>
</dbReference>
<dbReference type="GO" id="GO:0050821">
    <property type="term" value="P:protein stabilization"/>
    <property type="evidence" value="ECO:0007669"/>
    <property type="project" value="Ensembl"/>
</dbReference>
<dbReference type="GO" id="GO:0045765">
    <property type="term" value="P:regulation of angiogenesis"/>
    <property type="evidence" value="ECO:0000303"/>
    <property type="project" value="ComplexPortal"/>
</dbReference>
<dbReference type="GO" id="GO:0044319">
    <property type="term" value="P:wound healing, spreading of cells"/>
    <property type="evidence" value="ECO:0007669"/>
    <property type="project" value="Ensembl"/>
</dbReference>
<dbReference type="FunFam" id="1.10.12.70:FF:000001">
    <property type="entry name" value="Programmed cell death protein 10"/>
    <property type="match status" value="1"/>
</dbReference>
<dbReference type="FunFam" id="1.20.120.330:FF:000006">
    <property type="entry name" value="Programmed cell death protein 10"/>
    <property type="match status" value="1"/>
</dbReference>
<dbReference type="Gene3D" id="1.10.12.70">
    <property type="match status" value="1"/>
</dbReference>
<dbReference type="Gene3D" id="1.20.120.330">
    <property type="entry name" value="Nucleotidyltransferases domain 2"/>
    <property type="match status" value="1"/>
</dbReference>
<dbReference type="InterPro" id="IPR046409">
    <property type="entry name" value="PDC10_dimerisation_sf"/>
</dbReference>
<dbReference type="InterPro" id="IPR009652">
    <property type="entry name" value="PDCD10"/>
</dbReference>
<dbReference type="InterPro" id="IPR048288">
    <property type="entry name" value="PDCD10_N"/>
</dbReference>
<dbReference type="PANTHER" id="PTHR13250:SF1">
    <property type="entry name" value="PROGRAMMED CELL DEATH PROTEIN 10"/>
    <property type="match status" value="1"/>
</dbReference>
<dbReference type="PANTHER" id="PTHR13250">
    <property type="entry name" value="TF-1 CELL APOPTOSIS RELATED PROTEIN-15"/>
    <property type="match status" value="1"/>
</dbReference>
<dbReference type="Pfam" id="PF06840">
    <property type="entry name" value="PDC10_C"/>
    <property type="match status" value="1"/>
</dbReference>
<dbReference type="Pfam" id="PF20929">
    <property type="entry name" value="PDCD10_N"/>
    <property type="match status" value="1"/>
</dbReference>
<reference key="1">
    <citation type="submission" date="1999-06" db="EMBL/GenBank/DDBJ databases">
        <authorList>
            <person name="Sun R."/>
            <person name="Huang J."/>
            <person name="Han W."/>
            <person name="Wang Y."/>
            <person name="Zhang Y."/>
            <person name="Song Q."/>
            <person name="Ma D."/>
        </authorList>
    </citation>
    <scope>NUCLEOTIDE SEQUENCE [MRNA]</scope>
</reference>
<reference key="2">
    <citation type="journal article" date="2005" name="Science">
        <title>The transcriptional landscape of the mammalian genome.</title>
        <authorList>
            <person name="Carninci P."/>
            <person name="Kasukawa T."/>
            <person name="Katayama S."/>
            <person name="Gough J."/>
            <person name="Frith M.C."/>
            <person name="Maeda N."/>
            <person name="Oyama R."/>
            <person name="Ravasi T."/>
            <person name="Lenhard B."/>
            <person name="Wells C."/>
            <person name="Kodzius R."/>
            <person name="Shimokawa K."/>
            <person name="Bajic V.B."/>
            <person name="Brenner S.E."/>
            <person name="Batalov S."/>
            <person name="Forrest A.R."/>
            <person name="Zavolan M."/>
            <person name="Davis M.J."/>
            <person name="Wilming L.G."/>
            <person name="Aidinis V."/>
            <person name="Allen J.E."/>
            <person name="Ambesi-Impiombato A."/>
            <person name="Apweiler R."/>
            <person name="Aturaliya R.N."/>
            <person name="Bailey T.L."/>
            <person name="Bansal M."/>
            <person name="Baxter L."/>
            <person name="Beisel K.W."/>
            <person name="Bersano T."/>
            <person name="Bono H."/>
            <person name="Chalk A.M."/>
            <person name="Chiu K.P."/>
            <person name="Choudhary V."/>
            <person name="Christoffels A."/>
            <person name="Clutterbuck D.R."/>
            <person name="Crowe M.L."/>
            <person name="Dalla E."/>
            <person name="Dalrymple B.P."/>
            <person name="de Bono B."/>
            <person name="Della Gatta G."/>
            <person name="di Bernardo D."/>
            <person name="Down T."/>
            <person name="Engstrom P."/>
            <person name="Fagiolini M."/>
            <person name="Faulkner G."/>
            <person name="Fletcher C.F."/>
            <person name="Fukushima T."/>
            <person name="Furuno M."/>
            <person name="Futaki S."/>
            <person name="Gariboldi M."/>
            <person name="Georgii-Hemming P."/>
            <person name="Gingeras T.R."/>
            <person name="Gojobori T."/>
            <person name="Green R.E."/>
            <person name="Gustincich S."/>
            <person name="Harbers M."/>
            <person name="Hayashi Y."/>
            <person name="Hensch T.K."/>
            <person name="Hirokawa N."/>
            <person name="Hill D."/>
            <person name="Huminiecki L."/>
            <person name="Iacono M."/>
            <person name="Ikeo K."/>
            <person name="Iwama A."/>
            <person name="Ishikawa T."/>
            <person name="Jakt M."/>
            <person name="Kanapin A."/>
            <person name="Katoh M."/>
            <person name="Kawasawa Y."/>
            <person name="Kelso J."/>
            <person name="Kitamura H."/>
            <person name="Kitano H."/>
            <person name="Kollias G."/>
            <person name="Krishnan S.P."/>
            <person name="Kruger A."/>
            <person name="Kummerfeld S.K."/>
            <person name="Kurochkin I.V."/>
            <person name="Lareau L.F."/>
            <person name="Lazarevic D."/>
            <person name="Lipovich L."/>
            <person name="Liu J."/>
            <person name="Liuni S."/>
            <person name="McWilliam S."/>
            <person name="Madan Babu M."/>
            <person name="Madera M."/>
            <person name="Marchionni L."/>
            <person name="Matsuda H."/>
            <person name="Matsuzawa S."/>
            <person name="Miki H."/>
            <person name="Mignone F."/>
            <person name="Miyake S."/>
            <person name="Morris K."/>
            <person name="Mottagui-Tabar S."/>
            <person name="Mulder N."/>
            <person name="Nakano N."/>
            <person name="Nakauchi H."/>
            <person name="Ng P."/>
            <person name="Nilsson R."/>
            <person name="Nishiguchi S."/>
            <person name="Nishikawa S."/>
            <person name="Nori F."/>
            <person name="Ohara O."/>
            <person name="Okazaki Y."/>
            <person name="Orlando V."/>
            <person name="Pang K.C."/>
            <person name="Pavan W.J."/>
            <person name="Pavesi G."/>
            <person name="Pesole G."/>
            <person name="Petrovsky N."/>
            <person name="Piazza S."/>
            <person name="Reed J."/>
            <person name="Reid J.F."/>
            <person name="Ring B.Z."/>
            <person name="Ringwald M."/>
            <person name="Rost B."/>
            <person name="Ruan Y."/>
            <person name="Salzberg S.L."/>
            <person name="Sandelin A."/>
            <person name="Schneider C."/>
            <person name="Schoenbach C."/>
            <person name="Sekiguchi K."/>
            <person name="Semple C.A."/>
            <person name="Seno S."/>
            <person name="Sessa L."/>
            <person name="Sheng Y."/>
            <person name="Shibata Y."/>
            <person name="Shimada H."/>
            <person name="Shimada K."/>
            <person name="Silva D."/>
            <person name="Sinclair B."/>
            <person name="Sperling S."/>
            <person name="Stupka E."/>
            <person name="Sugiura K."/>
            <person name="Sultana R."/>
            <person name="Takenaka Y."/>
            <person name="Taki K."/>
            <person name="Tammoja K."/>
            <person name="Tan S.L."/>
            <person name="Tang S."/>
            <person name="Taylor M.S."/>
            <person name="Tegner J."/>
            <person name="Teichmann S.A."/>
            <person name="Ueda H.R."/>
            <person name="van Nimwegen E."/>
            <person name="Verardo R."/>
            <person name="Wei C.L."/>
            <person name="Yagi K."/>
            <person name="Yamanishi H."/>
            <person name="Zabarovsky E."/>
            <person name="Zhu S."/>
            <person name="Zimmer A."/>
            <person name="Hide W."/>
            <person name="Bult C."/>
            <person name="Grimmond S.M."/>
            <person name="Teasdale R.D."/>
            <person name="Liu E.T."/>
            <person name="Brusic V."/>
            <person name="Quackenbush J."/>
            <person name="Wahlestedt C."/>
            <person name="Mattick J.S."/>
            <person name="Hume D.A."/>
            <person name="Kai C."/>
            <person name="Sasaki D."/>
            <person name="Tomaru Y."/>
            <person name="Fukuda S."/>
            <person name="Kanamori-Katayama M."/>
            <person name="Suzuki M."/>
            <person name="Aoki J."/>
            <person name="Arakawa T."/>
            <person name="Iida J."/>
            <person name="Imamura K."/>
            <person name="Itoh M."/>
            <person name="Kato T."/>
            <person name="Kawaji H."/>
            <person name="Kawagashira N."/>
            <person name="Kawashima T."/>
            <person name="Kojima M."/>
            <person name="Kondo S."/>
            <person name="Konno H."/>
            <person name="Nakano K."/>
            <person name="Ninomiya N."/>
            <person name="Nishio T."/>
            <person name="Okada M."/>
            <person name="Plessy C."/>
            <person name="Shibata K."/>
            <person name="Shiraki T."/>
            <person name="Suzuki S."/>
            <person name="Tagami M."/>
            <person name="Waki K."/>
            <person name="Watahiki A."/>
            <person name="Okamura-Oho Y."/>
            <person name="Suzuki H."/>
            <person name="Kawai J."/>
            <person name="Hayashizaki Y."/>
        </authorList>
    </citation>
    <scope>NUCLEOTIDE SEQUENCE [LARGE SCALE MRNA]</scope>
    <source>
        <strain>C57BL/6J</strain>
        <strain>NOD</strain>
        <tissue>Kidney</tissue>
        <tissue>Pituitary</tissue>
        <tissue>Testis</tissue>
        <tissue>Thymus</tissue>
        <tissue>Urinary bladder</tissue>
    </source>
</reference>
<reference key="3">
    <citation type="journal article" date="2004" name="Genome Res.">
        <title>The status, quality, and expansion of the NIH full-length cDNA project: the Mammalian Gene Collection (MGC).</title>
        <authorList>
            <consortium name="The MGC Project Team"/>
        </authorList>
    </citation>
    <scope>NUCLEOTIDE SEQUENCE [LARGE SCALE MRNA]</scope>
    <source>
        <strain>C57BL/6J</strain>
        <strain>Czech II</strain>
        <tissue>Brain</tissue>
        <tissue>Mammary gland</tissue>
    </source>
</reference>
<reference key="4">
    <citation type="journal article" date="2010" name="Cell">
        <title>A tissue-specific atlas of mouse protein phosphorylation and expression.</title>
        <authorList>
            <person name="Huttlin E.L."/>
            <person name="Jedrychowski M.P."/>
            <person name="Elias J.E."/>
            <person name="Goswami T."/>
            <person name="Rad R."/>
            <person name="Beausoleil S.A."/>
            <person name="Villen J."/>
            <person name="Haas W."/>
            <person name="Sowa M.E."/>
            <person name="Gygi S.P."/>
        </authorList>
    </citation>
    <scope>IDENTIFICATION BY MASS SPECTROMETRY [LARGE SCALE ANALYSIS]</scope>
    <source>
        <tissue>Brain</tissue>
        <tissue>Brown adipose tissue</tissue>
        <tissue>Heart</tissue>
        <tissue>Kidney</tissue>
        <tissue>Liver</tissue>
        <tissue>Lung</tissue>
        <tissue>Pancreas</tissue>
        <tissue>Spleen</tissue>
        <tissue>Testis</tissue>
    </source>
</reference>
<reference key="5">
    <citation type="journal article" date="2010" name="Sci. Signal.">
        <title>Stabilization of VEGFR2 signaling by cerebral cavernous malformation 3 is critical for vascular development.</title>
        <authorList>
            <person name="He Y."/>
            <person name="Zhang H."/>
            <person name="Yu L."/>
            <person name="Gunel M."/>
            <person name="Boggon T.J."/>
            <person name="Chen H."/>
            <person name="Min W."/>
        </authorList>
    </citation>
    <scope>DISRUPTION PHENOTYPE</scope>
    <scope>FUNCTION</scope>
    <scope>SUBCELLULAR LOCATION</scope>
    <scope>INTERACTION WITH KDR</scope>
</reference>
<accession>Q8VE70</accession>
<accession>Q9DAR3</accession>
<accession>Q9WV43</accession>
<gene>
    <name type="primary">Pdcd10</name>
    <name type="synonym">Tfar15</name>
</gene>
<keyword id="KW-0007">Acetylation</keyword>
<keyword id="KW-0037">Angiogenesis</keyword>
<keyword id="KW-0053">Apoptosis</keyword>
<keyword id="KW-1003">Cell membrane</keyword>
<keyword id="KW-0963">Cytoplasm</keyword>
<keyword id="KW-0333">Golgi apparatus</keyword>
<keyword id="KW-1017">Isopeptide bond</keyword>
<keyword id="KW-0472">Membrane</keyword>
<keyword id="KW-1185">Reference proteome</keyword>
<keyword id="KW-0832">Ubl conjugation</keyword>
<evidence type="ECO:0000250" key="1">
    <source>
        <dbReference type="UniProtKB" id="Q6NX65"/>
    </source>
</evidence>
<evidence type="ECO:0000250" key="2">
    <source>
        <dbReference type="UniProtKB" id="Q9BUL8"/>
    </source>
</evidence>
<evidence type="ECO:0000269" key="3">
    <source>
    </source>
</evidence>
<evidence type="ECO:0000305" key="4"/>
<protein>
    <recommendedName>
        <fullName>Programmed cell death protein 10</fullName>
    </recommendedName>
    <alternativeName>
        <fullName>TF-1 cell apoptosis-related protein 15</fullName>
    </alternativeName>
</protein>
<comment type="function">
    <text evidence="2 3">Promotes cell proliferation. Modulates apoptotic pathways. Increases mitogen-activated protein kinase activity and STK26 activity. Important for cell migration, and for normal structure and assembly of the Golgi complex. Part of the striatin-interacting phosphatase and kinase (STRIPAK) complexes. STRIPAK complexes have critical roles in protein (de)phosphorylation and are regulators of multiple signaling pathways including Hippo, MAPK, nuclear receptor and cytoskeleton remodeling. Different types of STRIPAK complexes are involved in a variety of biological processes such as cell growth, differentiation, apoptosis, metabolism and immune regulation (By similarity). Important for KDR/VEGFR2 signaling. Increases the stability of KDR/VEGFR2 and prevents its breakdown (PubMed:20371769). Required for normal cardiovascular development. Required for normal angiogenesis, vasculogenesis and hematopoiesis during embryonic development (By similarity).</text>
</comment>
<comment type="subunit">
    <text evidence="2 3">Homodimer. Interacts (via C-terminus) with CCM2. Interacts (via C-terminus) with PXN. Interacts (via N-terminus) with STK25. Interacts (via N-terminus) with STK26. Interacts (via N-terminus) with STK24. Interacts with GOLGA2. Identified in a complex with KRIT1 and CCM2 (By similarity). Interacts with KDR/VEGFR2. Interaction with KDR/VEGFR2 is enhanced by stimulation with VEGFA (PubMed:20371769). Interacts with RIPOR1 (via C-terminus); this interaction is required for the association of RIPOR1 with either STK24 and STK26 kinases and occurs in a Rho-independent manner. Part of the core of STRIPAK complexes composed of PP2A catalytic and scaffolding subunits, the striatins (PP2A regulatory subunits), the striatin-associated proteins MOB4, STRIP1 and STRIP2, PDCD10 and members of the STE20 kinases, such as STK24 and STK26 (By similarity). Found in complex with PGCKA1 and members of the STE20 kinases, such as STK24, STK25 and STK26 (By similarity).</text>
</comment>
<comment type="subcellular location">
    <subcellularLocation>
        <location evidence="2">Cytoplasm</location>
    </subcellularLocation>
    <subcellularLocation>
        <location evidence="1">Golgi apparatus membrane</location>
        <topology evidence="1">Peripheral membrane protein</topology>
        <orientation evidence="1">Cytoplasmic side</orientation>
    </subcellularLocation>
    <subcellularLocation>
        <location evidence="3">Cell membrane</location>
        <topology evidence="3">Peripheral membrane protein</topology>
        <orientation evidence="3">Cytoplasmic side</orientation>
    </subcellularLocation>
</comment>
<comment type="disruption phenotype">
    <text evidence="3">Lethal at an early embryonic stage due to defects in angiogenesis, vasculogenesis and hematopoiesis. Mice exhibit low levels of KDR/VEGFR2.</text>
</comment>
<comment type="similarity">
    <text evidence="4">Belongs to the PDCD10 family.</text>
</comment>
<organism>
    <name type="scientific">Mus musculus</name>
    <name type="common">Mouse</name>
    <dbReference type="NCBI Taxonomy" id="10090"/>
    <lineage>
        <taxon>Eukaryota</taxon>
        <taxon>Metazoa</taxon>
        <taxon>Chordata</taxon>
        <taxon>Craniata</taxon>
        <taxon>Vertebrata</taxon>
        <taxon>Euteleostomi</taxon>
        <taxon>Mammalia</taxon>
        <taxon>Eutheria</taxon>
        <taxon>Euarchontoglires</taxon>
        <taxon>Glires</taxon>
        <taxon>Rodentia</taxon>
        <taxon>Myomorpha</taxon>
        <taxon>Muroidea</taxon>
        <taxon>Muridae</taxon>
        <taxon>Murinae</taxon>
        <taxon>Mus</taxon>
        <taxon>Mus</taxon>
    </lineage>
</organism>
<feature type="chain" id="PRO_0000187563" description="Programmed cell death protein 10">
    <location>
        <begin position="1"/>
        <end position="212"/>
    </location>
</feature>
<feature type="modified residue" description="N6-acetyllysine" evidence="2">
    <location>
        <position position="179"/>
    </location>
</feature>
<feature type="cross-link" description="Glycyl lysine isopeptide (Lys-Gly) (interchain with G-Cter in SUMO2)" evidence="2">
    <location>
        <position position="186"/>
    </location>
</feature>
<feature type="sequence conflict" description="In Ref. 2; BAB24143." evidence="4" ref="2">
    <original>M</original>
    <variation>V</variation>
    <location>
        <position position="3"/>
    </location>
</feature>
<feature type="sequence conflict" description="In Ref. 2; BAB24143." evidence="4" ref="2">
    <original>A</original>
    <variation>E</variation>
    <location>
        <position position="24"/>
    </location>
</feature>
<feature type="sequence conflict" description="In Ref. 2; BAB24143." evidence="4" ref="2">
    <original>A</original>
    <variation>Q</variation>
    <location>
        <position position="159"/>
    </location>
</feature>
<proteinExistence type="evidence at protein level"/>
<name>PDC10_MOUSE</name>